<organism>
    <name type="scientific">Shigella flexneri serotype X (strain 2002017)</name>
    <dbReference type="NCBI Taxonomy" id="591020"/>
    <lineage>
        <taxon>Bacteria</taxon>
        <taxon>Pseudomonadati</taxon>
        <taxon>Pseudomonadota</taxon>
        <taxon>Gammaproteobacteria</taxon>
        <taxon>Enterobacterales</taxon>
        <taxon>Enterobacteriaceae</taxon>
        <taxon>Shigella</taxon>
    </lineage>
</organism>
<sequence length="128" mass="13823">MPKSVIIPAGSSAPLAPFVPGTLADGVVYVSGTLAFDQHNNVLFADDPKAQTRHVLETIRKVIETAGGTMADVTFNSIFITDWKNYAAINEIYAEFFPGDKPARFYIQCGLVKPDALVEIATIAHIAK</sequence>
<keyword id="KW-0378">Hydrolase</keyword>
<gene>
    <name evidence="1" type="primary">rutC</name>
    <name type="ordered locus">SFxv_1099</name>
</gene>
<comment type="function">
    <text evidence="1">Involved in pyrimidine catabolism. Catalyzes the deamination of 3-aminoacrylate to malonic semialdehyde, a reaction that can also occur spontaneously. RutC may facilitate the reaction and modulate the metabolic fitness, rather than catalyzing essential functions.</text>
</comment>
<comment type="catalytic activity">
    <reaction evidence="1">
        <text>(Z)-3-aminoacrylate + H2O + H(+) = 3-oxopropanoate + NH4(+)</text>
        <dbReference type="Rhea" id="RHEA:34947"/>
        <dbReference type="ChEBI" id="CHEBI:15377"/>
        <dbReference type="ChEBI" id="CHEBI:15378"/>
        <dbReference type="ChEBI" id="CHEBI:28938"/>
        <dbReference type="ChEBI" id="CHEBI:33190"/>
        <dbReference type="ChEBI" id="CHEBI:59894"/>
    </reaction>
</comment>
<comment type="subunit">
    <text evidence="1">Homotrimer.</text>
</comment>
<comment type="similarity">
    <text evidence="1">Belongs to the RutC family.</text>
</comment>
<accession>D2AC41</accession>
<protein>
    <recommendedName>
        <fullName evidence="1">3-aminoacrylate deaminase RutC</fullName>
        <shortName evidence="1">3-AA deaminase</shortName>
        <ecNumber evidence="1">3.5.-.-</ecNumber>
    </recommendedName>
</protein>
<reference key="1">
    <citation type="journal article" date="2010" name="J. Clin. Microbiol.">
        <title>Emergence of a new multidrug-resistant serotype X variant in an epidemic clone of Shigella flexneri.</title>
        <authorList>
            <person name="Ye C."/>
            <person name="Lan R."/>
            <person name="Xia S."/>
            <person name="Zhang J."/>
            <person name="Sun Q."/>
            <person name="Zhang S."/>
            <person name="Jing H."/>
            <person name="Wang L."/>
            <person name="Li Z."/>
            <person name="Zhou Z."/>
            <person name="Zhao A."/>
            <person name="Cui Z."/>
            <person name="Cao J."/>
            <person name="Jin D."/>
            <person name="Huang L."/>
            <person name="Wang Y."/>
            <person name="Luo X."/>
            <person name="Bai X."/>
            <person name="Wang Y."/>
            <person name="Wang P."/>
            <person name="Xu Q."/>
            <person name="Xu J."/>
        </authorList>
    </citation>
    <scope>NUCLEOTIDE SEQUENCE [LARGE SCALE GENOMIC DNA]</scope>
    <source>
        <strain>2002017</strain>
    </source>
</reference>
<proteinExistence type="inferred from homology"/>
<dbReference type="EC" id="3.5.-.-" evidence="1"/>
<dbReference type="EMBL" id="CP001383">
    <property type="protein sequence ID" value="ADA73359.1"/>
    <property type="molecule type" value="Genomic_DNA"/>
</dbReference>
<dbReference type="RefSeq" id="WP_001126782.1">
    <property type="nucleotide sequence ID" value="NC_017328.1"/>
</dbReference>
<dbReference type="SMR" id="D2AC41"/>
<dbReference type="KEGG" id="sfe:SFxv_1099"/>
<dbReference type="PATRIC" id="fig|591020.3.peg.1173"/>
<dbReference type="HOGENOM" id="CLU_100715_7_3_6"/>
<dbReference type="GO" id="GO:0005829">
    <property type="term" value="C:cytosol"/>
    <property type="evidence" value="ECO:0007669"/>
    <property type="project" value="TreeGrafter"/>
</dbReference>
<dbReference type="GO" id="GO:0019239">
    <property type="term" value="F:deaminase activity"/>
    <property type="evidence" value="ECO:0007669"/>
    <property type="project" value="TreeGrafter"/>
</dbReference>
<dbReference type="GO" id="GO:0019740">
    <property type="term" value="P:nitrogen utilization"/>
    <property type="evidence" value="ECO:0007669"/>
    <property type="project" value="UniProtKB-UniRule"/>
</dbReference>
<dbReference type="GO" id="GO:0006212">
    <property type="term" value="P:uracil catabolic process"/>
    <property type="evidence" value="ECO:0007669"/>
    <property type="project" value="UniProtKB-UniRule"/>
</dbReference>
<dbReference type="CDD" id="cd00448">
    <property type="entry name" value="YjgF_YER057c_UK114_family"/>
    <property type="match status" value="1"/>
</dbReference>
<dbReference type="Gene3D" id="3.30.1330.40">
    <property type="entry name" value="RutC-like"/>
    <property type="match status" value="1"/>
</dbReference>
<dbReference type="HAMAP" id="MF_00831">
    <property type="entry name" value="RutC"/>
    <property type="match status" value="1"/>
</dbReference>
<dbReference type="InterPro" id="IPR019897">
    <property type="entry name" value="RidA_CS"/>
</dbReference>
<dbReference type="InterPro" id="IPR019898">
    <property type="entry name" value="RutC"/>
</dbReference>
<dbReference type="InterPro" id="IPR035959">
    <property type="entry name" value="RutC-like_sf"/>
</dbReference>
<dbReference type="InterPro" id="IPR006175">
    <property type="entry name" value="YjgF/YER057c/UK114"/>
</dbReference>
<dbReference type="NCBIfam" id="TIGR03610">
    <property type="entry name" value="RutC"/>
    <property type="match status" value="1"/>
</dbReference>
<dbReference type="PANTHER" id="PTHR11803">
    <property type="entry name" value="2-IMINOBUTANOATE/2-IMINOPROPANOATE DEAMINASE RIDA"/>
    <property type="match status" value="1"/>
</dbReference>
<dbReference type="PANTHER" id="PTHR11803:SF58">
    <property type="entry name" value="PROTEIN HMF1-RELATED"/>
    <property type="match status" value="1"/>
</dbReference>
<dbReference type="Pfam" id="PF01042">
    <property type="entry name" value="Ribonuc_L-PSP"/>
    <property type="match status" value="1"/>
</dbReference>
<dbReference type="SUPFAM" id="SSF55298">
    <property type="entry name" value="YjgF-like"/>
    <property type="match status" value="1"/>
</dbReference>
<dbReference type="PROSITE" id="PS01094">
    <property type="entry name" value="UPF0076"/>
    <property type="match status" value="1"/>
</dbReference>
<feature type="chain" id="PRO_0000402768" description="3-aminoacrylate deaminase RutC">
    <location>
        <begin position="1"/>
        <end position="128"/>
    </location>
</feature>
<name>RUTC_SHIF2</name>
<evidence type="ECO:0000255" key="1">
    <source>
        <dbReference type="HAMAP-Rule" id="MF_00831"/>
    </source>
</evidence>